<comment type="subcellular location">
    <subcellularLocation>
        <location evidence="3">Cytoplasm</location>
    </subcellularLocation>
    <subcellularLocation>
        <location evidence="3">Nucleus</location>
    </subcellularLocation>
</comment>
<comment type="tissue specificity">
    <text evidence="3">Specifically and constitutively expressed in brain (at protein level).</text>
</comment>
<comment type="induction">
    <text evidence="2 3">Up-regulated in bone marrow upon differentiation (at protein level).</text>
</comment>
<comment type="PTM">
    <text evidence="2 3">Phosphorylated.</text>
</comment>
<comment type="similarity">
    <text evidence="5">Belongs to the ANKRD34 family.</text>
</comment>
<comment type="sequence caution" evidence="5">
    <conflict type="frameshift">
        <sequence resource="EMBL-CDS" id="AAH96609"/>
    </conflict>
</comment>
<organism>
    <name type="scientific">Mus musculus</name>
    <name type="common">Mouse</name>
    <dbReference type="NCBI Taxonomy" id="10090"/>
    <lineage>
        <taxon>Eukaryota</taxon>
        <taxon>Metazoa</taxon>
        <taxon>Chordata</taxon>
        <taxon>Craniata</taxon>
        <taxon>Vertebrata</taxon>
        <taxon>Euteleostomi</taxon>
        <taxon>Mammalia</taxon>
        <taxon>Eutheria</taxon>
        <taxon>Euarchontoglires</taxon>
        <taxon>Glires</taxon>
        <taxon>Rodentia</taxon>
        <taxon>Myomorpha</taxon>
        <taxon>Muroidea</taxon>
        <taxon>Muridae</taxon>
        <taxon>Murinae</taxon>
        <taxon>Mus</taxon>
        <taxon>Mus</taxon>
    </lineage>
</organism>
<evidence type="ECO:0000256" key="1">
    <source>
        <dbReference type="SAM" id="MobiDB-lite"/>
    </source>
</evidence>
<evidence type="ECO:0000269" key="2">
    <source>
    </source>
</evidence>
<evidence type="ECO:0000269" key="3">
    <source>
    </source>
</evidence>
<evidence type="ECO:0000303" key="4">
    <source>
    </source>
</evidence>
<evidence type="ECO:0000305" key="5"/>
<evidence type="ECO:0007744" key="6">
    <source>
    </source>
</evidence>
<proteinExistence type="evidence at protein level"/>
<sequence>MDEGSEVSTDGNSLIKAVHQSRLRLTRLLLEGGAYINESNDRGETPLMIACKTKHVDQQSVGRAKMVKYLLENSADPNIQDKSGKSALMHACLERAGPEVVSLLLKSGADLSLQDHSGYSALVYAINAEDRDTLKVLLSACQAKGKEVIIITTAKSPSGRHTTQHHLNMPPADMDGSHPPATPSEIDIKTASLPLSYSSETDLTLFGFKDKELCGGSDNTWDPDSPPRKPVIATNGPKLSQAPAWIKSTPSLKHQARVASLQEELQDITPEEEIAYKTNALALSKRFITRHQSIDVKDTAHLLRAFDQVNSRKMSYDEINYHSLFPEGSQTSVEIPTDRDPDSNQIFASTLKSIVQKRNSGANHYSSDSQLAEGVTPPTVEDGKAAKKKIFAPSPSLLSGSKELVEPAPPGPLSRRNHAVLERRGSGAFPLDHSLAQSRPGFLPPLNVNPHPPITDIGVNNKICGLLSCGQKALMPTAPIFPKEFKTKKMLLRRQSLQTEQIKQLVNF</sequence>
<keyword id="KW-0040">ANK repeat</keyword>
<keyword id="KW-0963">Cytoplasm</keyword>
<keyword id="KW-0539">Nucleus</keyword>
<keyword id="KW-0597">Phosphoprotein</keyword>
<keyword id="KW-1185">Reference proteome</keyword>
<keyword id="KW-0677">Repeat</keyword>
<reference key="1">
    <citation type="journal article" date="2005" name="Science">
        <title>The transcriptional landscape of the mammalian genome.</title>
        <authorList>
            <person name="Carninci P."/>
            <person name="Kasukawa T."/>
            <person name="Katayama S."/>
            <person name="Gough J."/>
            <person name="Frith M.C."/>
            <person name="Maeda N."/>
            <person name="Oyama R."/>
            <person name="Ravasi T."/>
            <person name="Lenhard B."/>
            <person name="Wells C."/>
            <person name="Kodzius R."/>
            <person name="Shimokawa K."/>
            <person name="Bajic V.B."/>
            <person name="Brenner S.E."/>
            <person name="Batalov S."/>
            <person name="Forrest A.R."/>
            <person name="Zavolan M."/>
            <person name="Davis M.J."/>
            <person name="Wilming L.G."/>
            <person name="Aidinis V."/>
            <person name="Allen J.E."/>
            <person name="Ambesi-Impiombato A."/>
            <person name="Apweiler R."/>
            <person name="Aturaliya R.N."/>
            <person name="Bailey T.L."/>
            <person name="Bansal M."/>
            <person name="Baxter L."/>
            <person name="Beisel K.W."/>
            <person name="Bersano T."/>
            <person name="Bono H."/>
            <person name="Chalk A.M."/>
            <person name="Chiu K.P."/>
            <person name="Choudhary V."/>
            <person name="Christoffels A."/>
            <person name="Clutterbuck D.R."/>
            <person name="Crowe M.L."/>
            <person name="Dalla E."/>
            <person name="Dalrymple B.P."/>
            <person name="de Bono B."/>
            <person name="Della Gatta G."/>
            <person name="di Bernardo D."/>
            <person name="Down T."/>
            <person name="Engstrom P."/>
            <person name="Fagiolini M."/>
            <person name="Faulkner G."/>
            <person name="Fletcher C.F."/>
            <person name="Fukushima T."/>
            <person name="Furuno M."/>
            <person name="Futaki S."/>
            <person name="Gariboldi M."/>
            <person name="Georgii-Hemming P."/>
            <person name="Gingeras T.R."/>
            <person name="Gojobori T."/>
            <person name="Green R.E."/>
            <person name="Gustincich S."/>
            <person name="Harbers M."/>
            <person name="Hayashi Y."/>
            <person name="Hensch T.K."/>
            <person name="Hirokawa N."/>
            <person name="Hill D."/>
            <person name="Huminiecki L."/>
            <person name="Iacono M."/>
            <person name="Ikeo K."/>
            <person name="Iwama A."/>
            <person name="Ishikawa T."/>
            <person name="Jakt M."/>
            <person name="Kanapin A."/>
            <person name="Katoh M."/>
            <person name="Kawasawa Y."/>
            <person name="Kelso J."/>
            <person name="Kitamura H."/>
            <person name="Kitano H."/>
            <person name="Kollias G."/>
            <person name="Krishnan S.P."/>
            <person name="Kruger A."/>
            <person name="Kummerfeld S.K."/>
            <person name="Kurochkin I.V."/>
            <person name="Lareau L.F."/>
            <person name="Lazarevic D."/>
            <person name="Lipovich L."/>
            <person name="Liu J."/>
            <person name="Liuni S."/>
            <person name="McWilliam S."/>
            <person name="Madan Babu M."/>
            <person name="Madera M."/>
            <person name="Marchionni L."/>
            <person name="Matsuda H."/>
            <person name="Matsuzawa S."/>
            <person name="Miki H."/>
            <person name="Mignone F."/>
            <person name="Miyake S."/>
            <person name="Morris K."/>
            <person name="Mottagui-Tabar S."/>
            <person name="Mulder N."/>
            <person name="Nakano N."/>
            <person name="Nakauchi H."/>
            <person name="Ng P."/>
            <person name="Nilsson R."/>
            <person name="Nishiguchi S."/>
            <person name="Nishikawa S."/>
            <person name="Nori F."/>
            <person name="Ohara O."/>
            <person name="Okazaki Y."/>
            <person name="Orlando V."/>
            <person name="Pang K.C."/>
            <person name="Pavan W.J."/>
            <person name="Pavesi G."/>
            <person name="Pesole G."/>
            <person name="Petrovsky N."/>
            <person name="Piazza S."/>
            <person name="Reed J."/>
            <person name="Reid J.F."/>
            <person name="Ring B.Z."/>
            <person name="Ringwald M."/>
            <person name="Rost B."/>
            <person name="Ruan Y."/>
            <person name="Salzberg S.L."/>
            <person name="Sandelin A."/>
            <person name="Schneider C."/>
            <person name="Schoenbach C."/>
            <person name="Sekiguchi K."/>
            <person name="Semple C.A."/>
            <person name="Seno S."/>
            <person name="Sessa L."/>
            <person name="Sheng Y."/>
            <person name="Shibata Y."/>
            <person name="Shimada H."/>
            <person name="Shimada K."/>
            <person name="Silva D."/>
            <person name="Sinclair B."/>
            <person name="Sperling S."/>
            <person name="Stupka E."/>
            <person name="Sugiura K."/>
            <person name="Sultana R."/>
            <person name="Takenaka Y."/>
            <person name="Taki K."/>
            <person name="Tammoja K."/>
            <person name="Tan S.L."/>
            <person name="Tang S."/>
            <person name="Taylor M.S."/>
            <person name="Tegner J."/>
            <person name="Teichmann S.A."/>
            <person name="Ueda H.R."/>
            <person name="van Nimwegen E."/>
            <person name="Verardo R."/>
            <person name="Wei C.L."/>
            <person name="Yagi K."/>
            <person name="Yamanishi H."/>
            <person name="Zabarovsky E."/>
            <person name="Zhu S."/>
            <person name="Zimmer A."/>
            <person name="Hide W."/>
            <person name="Bult C."/>
            <person name="Grimmond S.M."/>
            <person name="Teasdale R.D."/>
            <person name="Liu E.T."/>
            <person name="Brusic V."/>
            <person name="Quackenbush J."/>
            <person name="Wahlestedt C."/>
            <person name="Mattick J.S."/>
            <person name="Hume D.A."/>
            <person name="Kai C."/>
            <person name="Sasaki D."/>
            <person name="Tomaru Y."/>
            <person name="Fukuda S."/>
            <person name="Kanamori-Katayama M."/>
            <person name="Suzuki M."/>
            <person name="Aoki J."/>
            <person name="Arakawa T."/>
            <person name="Iida J."/>
            <person name="Imamura K."/>
            <person name="Itoh M."/>
            <person name="Kato T."/>
            <person name="Kawaji H."/>
            <person name="Kawagashira N."/>
            <person name="Kawashima T."/>
            <person name="Kojima M."/>
            <person name="Kondo S."/>
            <person name="Konno H."/>
            <person name="Nakano K."/>
            <person name="Ninomiya N."/>
            <person name="Nishio T."/>
            <person name="Okada M."/>
            <person name="Plessy C."/>
            <person name="Shibata K."/>
            <person name="Shiraki T."/>
            <person name="Suzuki S."/>
            <person name="Tagami M."/>
            <person name="Waki K."/>
            <person name="Watahiki A."/>
            <person name="Okamura-Oho Y."/>
            <person name="Suzuki H."/>
            <person name="Kawai J."/>
            <person name="Hayashizaki Y."/>
        </authorList>
    </citation>
    <scope>NUCLEOTIDE SEQUENCE [LARGE SCALE MRNA]</scope>
    <source>
        <strain>C57BL/6J</strain>
        <tissue>Olfactory bulb</tissue>
        <tissue>Spinal cord</tissue>
    </source>
</reference>
<reference key="2">
    <citation type="journal article" date="2004" name="Genome Res.">
        <title>The status, quality, and expansion of the NIH full-length cDNA project: the Mammalian Gene Collection (MGC).</title>
        <authorList>
            <consortium name="The MGC Project Team"/>
        </authorList>
    </citation>
    <scope>NUCLEOTIDE SEQUENCE [LARGE SCALE MRNA]</scope>
    <source>
        <tissue>Brain</tissue>
        <tissue>Eye</tissue>
    </source>
</reference>
<reference key="3">
    <citation type="journal article" date="2004" name="Biochem. Biophys. Res. Commun.">
        <title>A novel phosphoprotein is induced during bone marrow commitment to dendritic cells.</title>
        <authorList>
            <person name="Al-Shaibi N."/>
            <person name="Ghosh S.K."/>
        </authorList>
    </citation>
    <scope>IDENTIFICATION BY MASS SPECTROMETRY</scope>
    <scope>INDUCTION</scope>
    <scope>PHOSPHORYLATION</scope>
</reference>
<reference key="4">
    <citation type="journal article" date="2006" name="Mol. Cell. Proteomics">
        <title>Comprehensive identification of phosphorylation sites in postsynaptic density preparations.</title>
        <authorList>
            <person name="Trinidad J.C."/>
            <person name="Specht C.G."/>
            <person name="Thalhammer A."/>
            <person name="Schoepfer R."/>
            <person name="Burlingame A.L."/>
        </authorList>
    </citation>
    <scope>IDENTIFICATION BY MASS SPECTROMETRY [LARGE SCALE ANALYSIS]</scope>
    <source>
        <tissue>Brain</tissue>
    </source>
</reference>
<reference key="5">
    <citation type="journal article" date="2007" name="Front. Biosci.">
        <title>DP58, an inducible myeloid protein, is constitutively expressed in murine neuronal nuclei.</title>
        <authorList>
            <person name="Al-Shaibi N."/>
            <person name="King M.W."/>
            <person name="Duong T."/>
            <person name="Ghosh S.K."/>
        </authorList>
    </citation>
    <scope>SUBCELLULAR LOCATION</scope>
    <scope>TISSUE SPECIFICITY</scope>
    <scope>INDUCTION</scope>
    <scope>PHOSPHORYLATION</scope>
</reference>
<reference key="6">
    <citation type="journal article" date="2010" name="Cell">
        <title>A tissue-specific atlas of mouse protein phosphorylation and expression.</title>
        <authorList>
            <person name="Huttlin E.L."/>
            <person name="Jedrychowski M.P."/>
            <person name="Elias J.E."/>
            <person name="Goswami T."/>
            <person name="Rad R."/>
            <person name="Beausoleil S.A."/>
            <person name="Villen J."/>
            <person name="Haas W."/>
            <person name="Sowa M.E."/>
            <person name="Gygi S.P."/>
        </authorList>
    </citation>
    <scope>PHOSPHORYLATION [LARGE SCALE ANALYSIS] AT SER-260; THR-269 AND SER-293</scope>
    <scope>IDENTIFICATION BY MASS SPECTROMETRY [LARGE SCALE ANALYSIS]</scope>
    <source>
        <tissue>Brain</tissue>
    </source>
</reference>
<dbReference type="EMBL" id="AK078203">
    <property type="protein sequence ID" value="BAC37170.1"/>
    <property type="molecule type" value="mRNA"/>
</dbReference>
<dbReference type="EMBL" id="AK138465">
    <property type="protein sequence ID" value="BAE23669.1"/>
    <property type="molecule type" value="mRNA"/>
</dbReference>
<dbReference type="EMBL" id="BC096609">
    <property type="protein sequence ID" value="AAH96609.1"/>
    <property type="status" value="ALT_FRAME"/>
    <property type="molecule type" value="mRNA"/>
</dbReference>
<dbReference type="EMBL" id="BC119312">
    <property type="protein sequence ID" value="AAI19313.1"/>
    <property type="molecule type" value="mRNA"/>
</dbReference>
<dbReference type="EMBL" id="BC119314">
    <property type="protein sequence ID" value="AAI19315.1"/>
    <property type="molecule type" value="mRNA"/>
</dbReference>
<dbReference type="CCDS" id="CCDS26681.1"/>
<dbReference type="RefSeq" id="NP_780664.2">
    <property type="nucleotide sequence ID" value="NM_175455.4"/>
</dbReference>
<dbReference type="RefSeq" id="XP_011242940.1">
    <property type="nucleotide sequence ID" value="XM_011244638.3"/>
</dbReference>
<dbReference type="RefSeq" id="XP_017170979.1">
    <property type="nucleotide sequence ID" value="XM_017315490.1"/>
</dbReference>
<dbReference type="RefSeq" id="XP_036013904.1">
    <property type="nucleotide sequence ID" value="XM_036158011.1"/>
</dbReference>
<dbReference type="SMR" id="Q3UUF8"/>
<dbReference type="STRING" id="10090.ENSMUSP00000054330"/>
<dbReference type="GlyGen" id="Q3UUF8">
    <property type="glycosylation" value="1 site"/>
</dbReference>
<dbReference type="iPTMnet" id="Q3UUF8"/>
<dbReference type="PhosphoSitePlus" id="Q3UUF8"/>
<dbReference type="PaxDb" id="10090-ENSMUSP00000054330"/>
<dbReference type="ProteomicsDB" id="282095"/>
<dbReference type="Antibodypedia" id="49135">
    <property type="antibodies" value="81 antibodies from 16 providers"/>
</dbReference>
<dbReference type="DNASU" id="218440"/>
<dbReference type="Ensembl" id="ENSMUST00000061594.13">
    <property type="protein sequence ID" value="ENSMUSP00000054330.7"/>
    <property type="gene ID" value="ENSMUSG00000045034.13"/>
</dbReference>
<dbReference type="Ensembl" id="ENSMUST00000168871.2">
    <property type="protein sequence ID" value="ENSMUSP00000126289.2"/>
    <property type="gene ID" value="ENSMUSG00000045034.13"/>
</dbReference>
<dbReference type="GeneID" id="218440"/>
<dbReference type="KEGG" id="mmu:218440"/>
<dbReference type="UCSC" id="uc007rkn.2">
    <property type="organism name" value="mouse"/>
</dbReference>
<dbReference type="AGR" id="MGI:2443245"/>
<dbReference type="CTD" id="340120"/>
<dbReference type="MGI" id="MGI:2443245">
    <property type="gene designation" value="Ankrd34b"/>
</dbReference>
<dbReference type="VEuPathDB" id="HostDB:ENSMUSG00000045034"/>
<dbReference type="eggNOG" id="ENOG502QRZ2">
    <property type="taxonomic scope" value="Eukaryota"/>
</dbReference>
<dbReference type="GeneTree" id="ENSGT00390000012355"/>
<dbReference type="HOGENOM" id="CLU_042805_0_0_1"/>
<dbReference type="InParanoid" id="Q3UUF8"/>
<dbReference type="OMA" id="AFPLDHN"/>
<dbReference type="OrthoDB" id="539213at2759"/>
<dbReference type="PhylomeDB" id="Q3UUF8"/>
<dbReference type="TreeFam" id="TF331155"/>
<dbReference type="BioGRID-ORCS" id="218440">
    <property type="hits" value="1 hit in 77 CRISPR screens"/>
</dbReference>
<dbReference type="CD-CODE" id="CE726F99">
    <property type="entry name" value="Postsynaptic density"/>
</dbReference>
<dbReference type="PRO" id="PR:Q3UUF8"/>
<dbReference type="Proteomes" id="UP000000589">
    <property type="component" value="Chromosome 13"/>
</dbReference>
<dbReference type="RNAct" id="Q3UUF8">
    <property type="molecule type" value="protein"/>
</dbReference>
<dbReference type="Bgee" id="ENSMUSG00000045034">
    <property type="expression patterns" value="Expressed in medial vestibular nucleus and 69 other cell types or tissues"/>
</dbReference>
<dbReference type="ExpressionAtlas" id="Q3UUF8">
    <property type="expression patterns" value="baseline and differential"/>
</dbReference>
<dbReference type="GO" id="GO:0005737">
    <property type="term" value="C:cytoplasm"/>
    <property type="evidence" value="ECO:0007669"/>
    <property type="project" value="UniProtKB-SubCell"/>
</dbReference>
<dbReference type="GO" id="GO:0005634">
    <property type="term" value="C:nucleus"/>
    <property type="evidence" value="ECO:0007669"/>
    <property type="project" value="UniProtKB-SubCell"/>
</dbReference>
<dbReference type="Gene3D" id="1.25.40.20">
    <property type="entry name" value="Ankyrin repeat-containing domain"/>
    <property type="match status" value="1"/>
</dbReference>
<dbReference type="InterPro" id="IPR042637">
    <property type="entry name" value="AN34A/B/C"/>
</dbReference>
<dbReference type="InterPro" id="IPR002110">
    <property type="entry name" value="Ankyrin_rpt"/>
</dbReference>
<dbReference type="InterPro" id="IPR036770">
    <property type="entry name" value="Ankyrin_rpt-contain_sf"/>
</dbReference>
<dbReference type="PANTHER" id="PTHR24156">
    <property type="entry name" value="ANK_REP_REGION DOMAIN-CONTAINING PROTEIN"/>
    <property type="match status" value="1"/>
</dbReference>
<dbReference type="PANTHER" id="PTHR24156:SF1">
    <property type="entry name" value="ANKYRIN REPEAT DOMAIN-CONTAINING PROTEIN 34B"/>
    <property type="match status" value="1"/>
</dbReference>
<dbReference type="Pfam" id="PF12796">
    <property type="entry name" value="Ank_2"/>
    <property type="match status" value="1"/>
</dbReference>
<dbReference type="Pfam" id="PF13637">
    <property type="entry name" value="Ank_4"/>
    <property type="match status" value="1"/>
</dbReference>
<dbReference type="SMART" id="SM00248">
    <property type="entry name" value="ANK"/>
    <property type="match status" value="4"/>
</dbReference>
<dbReference type="SUPFAM" id="SSF48403">
    <property type="entry name" value="Ankyrin repeat"/>
    <property type="match status" value="1"/>
</dbReference>
<dbReference type="PROSITE" id="PS50297">
    <property type="entry name" value="ANK_REP_REGION"/>
    <property type="match status" value="1"/>
</dbReference>
<dbReference type="PROSITE" id="PS50088">
    <property type="entry name" value="ANK_REPEAT"/>
    <property type="match status" value="2"/>
</dbReference>
<gene>
    <name type="primary">Ankrd34b</name>
    <name type="synonym">Dp58</name>
</gene>
<feature type="chain" id="PRO_0000319103" description="Ankyrin repeat domain-containing protein 34B">
    <location>
        <begin position="1"/>
        <end position="508"/>
    </location>
</feature>
<feature type="repeat" description="ANK 1">
    <location>
        <begin position="9"/>
        <end position="38"/>
    </location>
</feature>
<feature type="repeat" description="ANK 2">
    <location>
        <begin position="42"/>
        <end position="79"/>
    </location>
</feature>
<feature type="repeat" description="ANK 3">
    <location>
        <begin position="83"/>
        <end position="113"/>
    </location>
</feature>
<feature type="repeat" description="ANK 4">
    <location>
        <begin position="117"/>
        <end position="146"/>
    </location>
</feature>
<feature type="region of interest" description="Disordered" evidence="1">
    <location>
        <begin position="157"/>
        <end position="185"/>
    </location>
</feature>
<feature type="region of interest" description="Disordered" evidence="1">
    <location>
        <begin position="361"/>
        <end position="380"/>
    </location>
</feature>
<feature type="compositionally biased region" description="Polar residues" evidence="1">
    <location>
        <begin position="361"/>
        <end position="370"/>
    </location>
</feature>
<feature type="modified residue" description="Phosphoserine" evidence="6">
    <location>
        <position position="260"/>
    </location>
</feature>
<feature type="modified residue" description="Phosphothreonine" evidence="6">
    <location>
        <position position="269"/>
    </location>
</feature>
<feature type="modified residue" description="Phosphoserine" evidence="6">
    <location>
        <position position="293"/>
    </location>
</feature>
<feature type="sequence conflict" description="In Ref. 1; BAC37170." evidence="5" ref="1">
    <original>S</original>
    <variation>F</variation>
    <location>
        <position position="401"/>
    </location>
</feature>
<accession>Q3UUF8</accession>
<accession>Q4VA01</accession>
<accession>Q8BVH7</accession>
<name>AN34B_MOUSE</name>
<protein>
    <recommendedName>
        <fullName>Ankyrin repeat domain-containing protein 34B</fullName>
    </recommendedName>
    <alternativeName>
        <fullName evidence="4">Dendritic cell progenitor protein of 58 kDa</fullName>
    </alternativeName>
</protein>